<protein>
    <recommendedName>
        <fullName>NF-kappa-B inhibitor-interacting Ras-like protein 1</fullName>
    </recommendedName>
    <alternativeName>
        <fullName>I-kappa-B-interacting Ras-like protein 1</fullName>
        <shortName>Kappa B-Ras protein 1</shortName>
        <shortName>KappaB-Ras1</shortName>
    </alternativeName>
</protein>
<evidence type="ECO:0000250" key="1"/>
<evidence type="ECO:0000256" key="2">
    <source>
        <dbReference type="SAM" id="MobiDB-lite"/>
    </source>
</evidence>
<evidence type="ECO:0000305" key="3"/>
<name>KBRS1_MOUSE</name>
<comment type="function">
    <text evidence="1">Atypical Ras-like protein that acts as a potent regulator of NF-kappa-B activity by preventing the degradation of NF-kappa-B inhibitor beta (NFKBIB) by most signals, explaining why NFKBIB is more resistant to degradation. May act by blocking phosphorylation of NFKBIB and mediating cytoplasmic retention of p65/RELA NF-kappa-B subunit. It is unclear whether it acts as a GTPase. Both GTP- and GDP-bound forms block phosphorylation of NFKBIB (By similarity).</text>
</comment>
<comment type="subunit">
    <text evidence="1">Interacts with both NF-kappa-B inhibitor alpha (NFKBIA) and beta (NFKBIB) in vitro. However, it probably only interacts with NFKBIB in vivo. Forms a complex with NFKBIB and NF-kappa-B heterodimer (p50/NFKB1 and p65/RELA). Also interacts with c-Rel (REL) (By similarity).</text>
</comment>
<comment type="subcellular location">
    <subcellularLocation>
        <location evidence="1">Cytoplasm</location>
    </subcellularLocation>
</comment>
<comment type="domain">
    <text>In contrast to other members of the Ras family, the members of the KappaB-Ras subfamily do not contain the conserved Gly and Gln residues in positions 13 and 65, which are replaced by Leu residues, and are therefore similar to the constitutively active forms of oncogenic forms of Ras. This suggests that members of this family are clearly different from other small GTPases proteins.</text>
</comment>
<comment type="similarity">
    <text evidence="3">Belongs to the small GTPase superfamily. Ras family. KappaB-Ras subfamily.</text>
</comment>
<proteinExistence type="evidence at protein level"/>
<feature type="chain" id="PRO_0000225677" description="NF-kappa-B inhibitor-interacting Ras-like protein 1">
    <location>
        <begin position="1"/>
        <end position="192"/>
    </location>
</feature>
<feature type="region of interest" description="Interactions with NFKBIA and NFKBIB" evidence="1">
    <location>
        <begin position="58"/>
        <end position="93"/>
    </location>
</feature>
<feature type="region of interest" description="Disordered" evidence="2">
    <location>
        <begin position="168"/>
        <end position="192"/>
    </location>
</feature>
<feature type="short sequence motif" description="Effector region">
    <location>
        <begin position="35"/>
        <end position="43"/>
    </location>
</feature>
<feature type="binding site" evidence="1">
    <location>
        <begin position="11"/>
        <end position="18"/>
    </location>
    <ligand>
        <name>GTP</name>
        <dbReference type="ChEBI" id="CHEBI:37565"/>
    </ligand>
</feature>
<feature type="binding site" evidence="1">
    <location>
        <begin position="61"/>
        <end position="65"/>
    </location>
    <ligand>
        <name>GTP</name>
        <dbReference type="ChEBI" id="CHEBI:37565"/>
    </ligand>
</feature>
<feature type="binding site" evidence="1">
    <location>
        <begin position="120"/>
        <end position="123"/>
    </location>
    <ligand>
        <name>GTP</name>
        <dbReference type="ChEBI" id="CHEBI:37565"/>
    </ligand>
</feature>
<feature type="sequence conflict" description="In Ref. 1; AAF43150." evidence="3" ref="1">
    <original>E</original>
    <variation>D</variation>
    <location>
        <position position="70"/>
    </location>
</feature>
<accession>Q8CEC5</accession>
<accession>Q9JKV3</accession>
<organism>
    <name type="scientific">Mus musculus</name>
    <name type="common">Mouse</name>
    <dbReference type="NCBI Taxonomy" id="10090"/>
    <lineage>
        <taxon>Eukaryota</taxon>
        <taxon>Metazoa</taxon>
        <taxon>Chordata</taxon>
        <taxon>Craniata</taxon>
        <taxon>Vertebrata</taxon>
        <taxon>Euteleostomi</taxon>
        <taxon>Mammalia</taxon>
        <taxon>Eutheria</taxon>
        <taxon>Euarchontoglires</taxon>
        <taxon>Glires</taxon>
        <taxon>Rodentia</taxon>
        <taxon>Myomorpha</taxon>
        <taxon>Muroidea</taxon>
        <taxon>Muridae</taxon>
        <taxon>Murinae</taxon>
        <taxon>Mus</taxon>
        <taxon>Mus</taxon>
    </lineage>
</organism>
<reference key="1">
    <citation type="journal article" date="2000" name="Science">
        <title>A subclass of Ras proteins that regulate the degradation of IkappaB.</title>
        <authorList>
            <person name="Fenwick C."/>
            <person name="Na S.-Y."/>
            <person name="Voll R.E."/>
            <person name="Zhong H."/>
            <person name="Im S.-Y."/>
            <person name="Lee J.W."/>
            <person name="Ghosh S."/>
        </authorList>
    </citation>
    <scope>NUCLEOTIDE SEQUENCE [MRNA]</scope>
</reference>
<reference key="2">
    <citation type="journal article" date="2005" name="Science">
        <title>The transcriptional landscape of the mammalian genome.</title>
        <authorList>
            <person name="Carninci P."/>
            <person name="Kasukawa T."/>
            <person name="Katayama S."/>
            <person name="Gough J."/>
            <person name="Frith M.C."/>
            <person name="Maeda N."/>
            <person name="Oyama R."/>
            <person name="Ravasi T."/>
            <person name="Lenhard B."/>
            <person name="Wells C."/>
            <person name="Kodzius R."/>
            <person name="Shimokawa K."/>
            <person name="Bajic V.B."/>
            <person name="Brenner S.E."/>
            <person name="Batalov S."/>
            <person name="Forrest A.R."/>
            <person name="Zavolan M."/>
            <person name="Davis M.J."/>
            <person name="Wilming L.G."/>
            <person name="Aidinis V."/>
            <person name="Allen J.E."/>
            <person name="Ambesi-Impiombato A."/>
            <person name="Apweiler R."/>
            <person name="Aturaliya R.N."/>
            <person name="Bailey T.L."/>
            <person name="Bansal M."/>
            <person name="Baxter L."/>
            <person name="Beisel K.W."/>
            <person name="Bersano T."/>
            <person name="Bono H."/>
            <person name="Chalk A.M."/>
            <person name="Chiu K.P."/>
            <person name="Choudhary V."/>
            <person name="Christoffels A."/>
            <person name="Clutterbuck D.R."/>
            <person name="Crowe M.L."/>
            <person name="Dalla E."/>
            <person name="Dalrymple B.P."/>
            <person name="de Bono B."/>
            <person name="Della Gatta G."/>
            <person name="di Bernardo D."/>
            <person name="Down T."/>
            <person name="Engstrom P."/>
            <person name="Fagiolini M."/>
            <person name="Faulkner G."/>
            <person name="Fletcher C.F."/>
            <person name="Fukushima T."/>
            <person name="Furuno M."/>
            <person name="Futaki S."/>
            <person name="Gariboldi M."/>
            <person name="Georgii-Hemming P."/>
            <person name="Gingeras T.R."/>
            <person name="Gojobori T."/>
            <person name="Green R.E."/>
            <person name="Gustincich S."/>
            <person name="Harbers M."/>
            <person name="Hayashi Y."/>
            <person name="Hensch T.K."/>
            <person name="Hirokawa N."/>
            <person name="Hill D."/>
            <person name="Huminiecki L."/>
            <person name="Iacono M."/>
            <person name="Ikeo K."/>
            <person name="Iwama A."/>
            <person name="Ishikawa T."/>
            <person name="Jakt M."/>
            <person name="Kanapin A."/>
            <person name="Katoh M."/>
            <person name="Kawasawa Y."/>
            <person name="Kelso J."/>
            <person name="Kitamura H."/>
            <person name="Kitano H."/>
            <person name="Kollias G."/>
            <person name="Krishnan S.P."/>
            <person name="Kruger A."/>
            <person name="Kummerfeld S.K."/>
            <person name="Kurochkin I.V."/>
            <person name="Lareau L.F."/>
            <person name="Lazarevic D."/>
            <person name="Lipovich L."/>
            <person name="Liu J."/>
            <person name="Liuni S."/>
            <person name="McWilliam S."/>
            <person name="Madan Babu M."/>
            <person name="Madera M."/>
            <person name="Marchionni L."/>
            <person name="Matsuda H."/>
            <person name="Matsuzawa S."/>
            <person name="Miki H."/>
            <person name="Mignone F."/>
            <person name="Miyake S."/>
            <person name="Morris K."/>
            <person name="Mottagui-Tabar S."/>
            <person name="Mulder N."/>
            <person name="Nakano N."/>
            <person name="Nakauchi H."/>
            <person name="Ng P."/>
            <person name="Nilsson R."/>
            <person name="Nishiguchi S."/>
            <person name="Nishikawa S."/>
            <person name="Nori F."/>
            <person name="Ohara O."/>
            <person name="Okazaki Y."/>
            <person name="Orlando V."/>
            <person name="Pang K.C."/>
            <person name="Pavan W.J."/>
            <person name="Pavesi G."/>
            <person name="Pesole G."/>
            <person name="Petrovsky N."/>
            <person name="Piazza S."/>
            <person name="Reed J."/>
            <person name="Reid J.F."/>
            <person name="Ring B.Z."/>
            <person name="Ringwald M."/>
            <person name="Rost B."/>
            <person name="Ruan Y."/>
            <person name="Salzberg S.L."/>
            <person name="Sandelin A."/>
            <person name="Schneider C."/>
            <person name="Schoenbach C."/>
            <person name="Sekiguchi K."/>
            <person name="Semple C.A."/>
            <person name="Seno S."/>
            <person name="Sessa L."/>
            <person name="Sheng Y."/>
            <person name="Shibata Y."/>
            <person name="Shimada H."/>
            <person name="Shimada K."/>
            <person name="Silva D."/>
            <person name="Sinclair B."/>
            <person name="Sperling S."/>
            <person name="Stupka E."/>
            <person name="Sugiura K."/>
            <person name="Sultana R."/>
            <person name="Takenaka Y."/>
            <person name="Taki K."/>
            <person name="Tammoja K."/>
            <person name="Tan S.L."/>
            <person name="Tang S."/>
            <person name="Taylor M.S."/>
            <person name="Tegner J."/>
            <person name="Teichmann S.A."/>
            <person name="Ueda H.R."/>
            <person name="van Nimwegen E."/>
            <person name="Verardo R."/>
            <person name="Wei C.L."/>
            <person name="Yagi K."/>
            <person name="Yamanishi H."/>
            <person name="Zabarovsky E."/>
            <person name="Zhu S."/>
            <person name="Zimmer A."/>
            <person name="Hide W."/>
            <person name="Bult C."/>
            <person name="Grimmond S.M."/>
            <person name="Teasdale R.D."/>
            <person name="Liu E.T."/>
            <person name="Brusic V."/>
            <person name="Quackenbush J."/>
            <person name="Wahlestedt C."/>
            <person name="Mattick J.S."/>
            <person name="Hume D.A."/>
            <person name="Kai C."/>
            <person name="Sasaki D."/>
            <person name="Tomaru Y."/>
            <person name="Fukuda S."/>
            <person name="Kanamori-Katayama M."/>
            <person name="Suzuki M."/>
            <person name="Aoki J."/>
            <person name="Arakawa T."/>
            <person name="Iida J."/>
            <person name="Imamura K."/>
            <person name="Itoh M."/>
            <person name="Kato T."/>
            <person name="Kawaji H."/>
            <person name="Kawagashira N."/>
            <person name="Kawashima T."/>
            <person name="Kojima M."/>
            <person name="Kondo S."/>
            <person name="Konno H."/>
            <person name="Nakano K."/>
            <person name="Ninomiya N."/>
            <person name="Nishio T."/>
            <person name="Okada M."/>
            <person name="Plessy C."/>
            <person name="Shibata K."/>
            <person name="Shiraki T."/>
            <person name="Suzuki S."/>
            <person name="Tagami M."/>
            <person name="Waki K."/>
            <person name="Watahiki A."/>
            <person name="Okamura-Oho Y."/>
            <person name="Suzuki H."/>
            <person name="Kawai J."/>
            <person name="Hayashizaki Y."/>
        </authorList>
    </citation>
    <scope>NUCLEOTIDE SEQUENCE [LARGE SCALE MRNA]</scope>
    <source>
        <strain>C57BL/6J</strain>
        <tissue>Placenta</tissue>
        <tissue>Skin</tissue>
    </source>
</reference>
<reference key="3">
    <citation type="journal article" date="2004" name="Genome Res.">
        <title>The status, quality, and expansion of the NIH full-length cDNA project: the Mammalian Gene Collection (MGC).</title>
        <authorList>
            <consortium name="The MGC Project Team"/>
        </authorList>
    </citation>
    <scope>NUCLEOTIDE SEQUENCE [LARGE SCALE MRNA]</scope>
    <source>
        <tissue>Brain</tissue>
    </source>
</reference>
<reference key="4">
    <citation type="journal article" date="2006" name="Mol. Cell. Proteomics">
        <title>Comprehensive identification of phosphorylation sites in postsynaptic density preparations.</title>
        <authorList>
            <person name="Trinidad J.C."/>
            <person name="Specht C.G."/>
            <person name="Thalhammer A."/>
            <person name="Schoepfer R."/>
            <person name="Burlingame A.L."/>
        </authorList>
    </citation>
    <scope>IDENTIFICATION BY MASS SPECTROMETRY [LARGE SCALE ANALYSIS]</scope>
    <source>
        <tissue>Brain</tissue>
    </source>
</reference>
<reference key="5">
    <citation type="journal article" date="2010" name="Cell">
        <title>A tissue-specific atlas of mouse protein phosphorylation and expression.</title>
        <authorList>
            <person name="Huttlin E.L."/>
            <person name="Jedrychowski M.P."/>
            <person name="Elias J.E."/>
            <person name="Goswami T."/>
            <person name="Rad R."/>
            <person name="Beausoleil S.A."/>
            <person name="Villen J."/>
            <person name="Haas W."/>
            <person name="Sowa M.E."/>
            <person name="Gygi S.P."/>
        </authorList>
    </citation>
    <scope>IDENTIFICATION BY MASS SPECTROMETRY [LARGE SCALE ANALYSIS]</scope>
    <source>
        <tissue>Brain</tissue>
        <tissue>Testis</tissue>
    </source>
</reference>
<gene>
    <name type="primary">Nkiras1</name>
</gene>
<dbReference type="EMBL" id="AF225707">
    <property type="protein sequence ID" value="AAF43150.1"/>
    <property type="molecule type" value="mRNA"/>
</dbReference>
<dbReference type="EMBL" id="AK028539">
    <property type="protein sequence ID" value="BAC25998.1"/>
    <property type="molecule type" value="mRNA"/>
</dbReference>
<dbReference type="EMBL" id="AK148040">
    <property type="protein sequence ID" value="BAE28306.1"/>
    <property type="molecule type" value="mRNA"/>
</dbReference>
<dbReference type="EMBL" id="AK167340">
    <property type="protein sequence ID" value="BAE39441.1"/>
    <property type="molecule type" value="mRNA"/>
</dbReference>
<dbReference type="EMBL" id="BC061092">
    <property type="protein sequence ID" value="AAH61092.1"/>
    <property type="molecule type" value="mRNA"/>
</dbReference>
<dbReference type="CCDS" id="CCDS26836.1"/>
<dbReference type="RefSeq" id="NP_001303640.1">
    <property type="nucleotide sequence ID" value="NM_001316711.1"/>
</dbReference>
<dbReference type="RefSeq" id="NP_001303641.1">
    <property type="nucleotide sequence ID" value="NM_001316712.1"/>
</dbReference>
<dbReference type="RefSeq" id="NP_076015.2">
    <property type="nucleotide sequence ID" value="NM_023526.4"/>
</dbReference>
<dbReference type="RefSeq" id="XP_006518160.1">
    <property type="nucleotide sequence ID" value="XM_006518097.5"/>
</dbReference>
<dbReference type="SMR" id="Q8CEC5"/>
<dbReference type="BioGRID" id="213637">
    <property type="interactions" value="6"/>
</dbReference>
<dbReference type="FunCoup" id="Q8CEC5">
    <property type="interactions" value="1511"/>
</dbReference>
<dbReference type="STRING" id="10090.ENSMUSP00000121496"/>
<dbReference type="iPTMnet" id="Q8CEC5"/>
<dbReference type="PhosphoSitePlus" id="Q8CEC5"/>
<dbReference type="PaxDb" id="10090-ENSMUSP00000121496"/>
<dbReference type="ProteomicsDB" id="263479"/>
<dbReference type="Antibodypedia" id="11367">
    <property type="antibodies" value="360 antibodies from 32 providers"/>
</dbReference>
<dbReference type="DNASU" id="69721"/>
<dbReference type="Ensembl" id="ENSMUST00000132374.9">
    <property type="protein sequence ID" value="ENSMUSP00000121496.2"/>
    <property type="gene ID" value="ENSMUSG00000021772.16"/>
</dbReference>
<dbReference type="GeneID" id="69721"/>
<dbReference type="KEGG" id="mmu:69721"/>
<dbReference type="UCSC" id="uc007shs.1">
    <property type="organism name" value="mouse"/>
</dbReference>
<dbReference type="AGR" id="MGI:1916971"/>
<dbReference type="CTD" id="28512"/>
<dbReference type="MGI" id="MGI:1916971">
    <property type="gene designation" value="Nkiras1"/>
</dbReference>
<dbReference type="VEuPathDB" id="HostDB:ENSMUSG00000021772"/>
<dbReference type="eggNOG" id="KOG3883">
    <property type="taxonomic scope" value="Eukaryota"/>
</dbReference>
<dbReference type="GeneTree" id="ENSGT00940000159705"/>
<dbReference type="HOGENOM" id="CLU_041217_17_0_1"/>
<dbReference type="InParanoid" id="Q8CEC5"/>
<dbReference type="OMA" id="IANMHSR"/>
<dbReference type="OrthoDB" id="10002389at2759"/>
<dbReference type="PhylomeDB" id="Q8CEC5"/>
<dbReference type="TreeFam" id="TF314483"/>
<dbReference type="Reactome" id="R-MMU-1810476">
    <property type="pathway name" value="RIP-mediated NFkB activation via ZBP1"/>
</dbReference>
<dbReference type="Reactome" id="R-MMU-445989">
    <property type="pathway name" value="TAK1-dependent IKK and NF-kappa-B activation"/>
</dbReference>
<dbReference type="Reactome" id="R-MMU-933542">
    <property type="pathway name" value="TRAF6 mediated NF-kB activation"/>
</dbReference>
<dbReference type="BioGRID-ORCS" id="69721">
    <property type="hits" value="1 hit in 77 CRISPR screens"/>
</dbReference>
<dbReference type="ChiTaRS" id="Nkiras1">
    <property type="organism name" value="mouse"/>
</dbReference>
<dbReference type="PRO" id="PR:Q8CEC5"/>
<dbReference type="Proteomes" id="UP000000589">
    <property type="component" value="Chromosome 14"/>
</dbReference>
<dbReference type="RNAct" id="Q8CEC5">
    <property type="molecule type" value="protein"/>
</dbReference>
<dbReference type="Bgee" id="ENSMUSG00000021772">
    <property type="expression patterns" value="Expressed in facial nucleus and 256 other cell types or tissues"/>
</dbReference>
<dbReference type="ExpressionAtlas" id="Q8CEC5">
    <property type="expression patterns" value="baseline and differential"/>
</dbReference>
<dbReference type="GO" id="GO:0005829">
    <property type="term" value="C:cytosol"/>
    <property type="evidence" value="ECO:0007669"/>
    <property type="project" value="Ensembl"/>
</dbReference>
<dbReference type="GO" id="GO:0005783">
    <property type="term" value="C:endoplasmic reticulum"/>
    <property type="evidence" value="ECO:0007669"/>
    <property type="project" value="Ensembl"/>
</dbReference>
<dbReference type="GO" id="GO:0005525">
    <property type="term" value="F:GTP binding"/>
    <property type="evidence" value="ECO:0007669"/>
    <property type="project" value="UniProtKB-KW"/>
</dbReference>
<dbReference type="GO" id="GO:0032794">
    <property type="term" value="F:GTPase activating protein binding"/>
    <property type="evidence" value="ECO:0000353"/>
    <property type="project" value="MGI"/>
</dbReference>
<dbReference type="GO" id="GO:0003924">
    <property type="term" value="F:GTPase activity"/>
    <property type="evidence" value="ECO:0007669"/>
    <property type="project" value="InterPro"/>
</dbReference>
<dbReference type="GO" id="GO:0048286">
    <property type="term" value="P:lung alveolus development"/>
    <property type="evidence" value="ECO:0000316"/>
    <property type="project" value="MGI"/>
</dbReference>
<dbReference type="GO" id="GO:0043124">
    <property type="term" value="P:negative regulation of canonical NF-kappaB signal transduction"/>
    <property type="evidence" value="ECO:0007669"/>
    <property type="project" value="InterPro"/>
</dbReference>
<dbReference type="GO" id="GO:0032484">
    <property type="term" value="P:Ral protein signal transduction"/>
    <property type="evidence" value="ECO:0000316"/>
    <property type="project" value="MGI"/>
</dbReference>
<dbReference type="GO" id="GO:0010803">
    <property type="term" value="P:regulation of tumor necrosis factor-mediated signaling pathway"/>
    <property type="evidence" value="ECO:0000316"/>
    <property type="project" value="MGI"/>
</dbReference>
<dbReference type="GO" id="GO:0043129">
    <property type="term" value="P:surfactant homeostasis"/>
    <property type="evidence" value="ECO:0000316"/>
    <property type="project" value="MGI"/>
</dbReference>
<dbReference type="Gene3D" id="3.40.50.300">
    <property type="entry name" value="P-loop containing nucleotide triphosphate hydrolases"/>
    <property type="match status" value="1"/>
</dbReference>
<dbReference type="InterPro" id="IPR042227">
    <property type="entry name" value="KBRS"/>
</dbReference>
<dbReference type="InterPro" id="IPR027417">
    <property type="entry name" value="P-loop_NTPase"/>
</dbReference>
<dbReference type="InterPro" id="IPR005225">
    <property type="entry name" value="Small_GTP-bd"/>
</dbReference>
<dbReference type="InterPro" id="IPR001806">
    <property type="entry name" value="Small_GTPase"/>
</dbReference>
<dbReference type="NCBIfam" id="TIGR00231">
    <property type="entry name" value="small_GTP"/>
    <property type="match status" value="1"/>
</dbReference>
<dbReference type="PANTHER" id="PTHR46152">
    <property type="entry name" value="NF-KAPPA-B INHIBITOR-INTERACTING RAS-LIKE PROTEIN"/>
    <property type="match status" value="1"/>
</dbReference>
<dbReference type="PANTHER" id="PTHR46152:SF1">
    <property type="entry name" value="NF-KAPPA-B INHIBITOR-INTERACTING RAS-LIKE PROTEIN 1"/>
    <property type="match status" value="1"/>
</dbReference>
<dbReference type="Pfam" id="PF00071">
    <property type="entry name" value="Ras"/>
    <property type="match status" value="1"/>
</dbReference>
<dbReference type="PRINTS" id="PR00449">
    <property type="entry name" value="RASTRNSFRMNG"/>
</dbReference>
<dbReference type="SMART" id="SM00175">
    <property type="entry name" value="RAB"/>
    <property type="match status" value="1"/>
</dbReference>
<dbReference type="SMART" id="SM00173">
    <property type="entry name" value="RAS"/>
    <property type="match status" value="1"/>
</dbReference>
<dbReference type="SUPFAM" id="SSF52540">
    <property type="entry name" value="P-loop containing nucleoside triphosphate hydrolases"/>
    <property type="match status" value="1"/>
</dbReference>
<dbReference type="PROSITE" id="PS51419">
    <property type="entry name" value="RAB"/>
    <property type="match status" value="1"/>
</dbReference>
<keyword id="KW-0963">Cytoplasm</keyword>
<keyword id="KW-0342">GTP-binding</keyword>
<keyword id="KW-0547">Nucleotide-binding</keyword>
<keyword id="KW-1185">Reference proteome</keyword>
<sequence length="192" mass="21662">MGKGCKVVICGLLSVGKTAILEQLLYGNHTIGMEDCETLEDVYMASVETDRGVKEQLHLYDTRGLQKGVELPKHYFSFADGFVLVYSVNNLESFQRVELLKKEIDKFKDKKEVAIVVLGNKLDLSEQRQVDADVAQQWARSEKVKLWEVTVTDRRTLIEPFTLLASKLSQPQSKSSFPLPGRKNKGNSNPEN</sequence>